<feature type="signal peptide" evidence="2">
    <location>
        <begin position="1"/>
        <end position="24"/>
    </location>
</feature>
<feature type="chain" id="PRO_0000413707" description="Gibberellin-regulated protein 9">
    <location>
        <begin position="25"/>
        <end position="119"/>
    </location>
</feature>
<name>GASA9_ARATH</name>
<proteinExistence type="inferred from homology"/>
<accession>Q8GWK5</accession>
<comment type="function">
    <text evidence="1">Gibberellin-regulated protein that may function in hormonal controlled steps of development such as seed germination, flowering and seed maturation.</text>
</comment>
<comment type="subcellular location">
    <subcellularLocation>
        <location evidence="1">Secreted</location>
    </subcellularLocation>
</comment>
<comment type="PTM">
    <text evidence="1">Six disulfide bonds may be present.</text>
</comment>
<comment type="similarity">
    <text evidence="3">Belongs to the GASA family.</text>
</comment>
<keyword id="KW-1015">Disulfide bond</keyword>
<keyword id="KW-0939">Gibberellin signaling pathway</keyword>
<keyword id="KW-1185">Reference proteome</keyword>
<keyword id="KW-0964">Secreted</keyword>
<keyword id="KW-0732">Signal</keyword>
<dbReference type="EMBL" id="AC003979">
    <property type="status" value="NOT_ANNOTATED_CDS"/>
    <property type="molecule type" value="Genomic_DNA"/>
</dbReference>
<dbReference type="EMBL" id="CP002684">
    <property type="protein sequence ID" value="AEE30270.1"/>
    <property type="molecule type" value="Genomic_DNA"/>
</dbReference>
<dbReference type="EMBL" id="CP002684">
    <property type="protein sequence ID" value="AEE30271.1"/>
    <property type="molecule type" value="Genomic_DNA"/>
</dbReference>
<dbReference type="EMBL" id="CP002684">
    <property type="protein sequence ID" value="AEE30272.1"/>
    <property type="molecule type" value="Genomic_DNA"/>
</dbReference>
<dbReference type="EMBL" id="AK118784">
    <property type="protein sequence ID" value="BAC43377.1"/>
    <property type="molecule type" value="mRNA"/>
</dbReference>
<dbReference type="RefSeq" id="NP_001185065.1">
    <property type="nucleotide sequence ID" value="NM_001198136.1"/>
</dbReference>
<dbReference type="RefSeq" id="NP_001185066.1">
    <property type="nucleotide sequence ID" value="NM_001198137.1"/>
</dbReference>
<dbReference type="RefSeq" id="NP_173683.1">
    <property type="nucleotide sequence ID" value="NM_102116.5"/>
</dbReference>
<dbReference type="SMR" id="Q8GWK5"/>
<dbReference type="FunCoup" id="Q8GWK5">
    <property type="interactions" value="53"/>
</dbReference>
<dbReference type="STRING" id="3702.Q8GWK5"/>
<dbReference type="PaxDb" id="3702-AT1G22690.1"/>
<dbReference type="ProteomicsDB" id="230011"/>
<dbReference type="EnsemblPlants" id="AT1G22690.1">
    <property type="protein sequence ID" value="AT1G22690.1"/>
    <property type="gene ID" value="AT1G22690"/>
</dbReference>
<dbReference type="EnsemblPlants" id="AT1G22690.2">
    <property type="protein sequence ID" value="AT1G22690.2"/>
    <property type="gene ID" value="AT1G22690"/>
</dbReference>
<dbReference type="EnsemblPlants" id="AT1G22690.3">
    <property type="protein sequence ID" value="AT1G22690.3"/>
    <property type="gene ID" value="AT1G22690"/>
</dbReference>
<dbReference type="GeneID" id="838875"/>
<dbReference type="Gramene" id="AT1G22690.1">
    <property type="protein sequence ID" value="AT1G22690.1"/>
    <property type="gene ID" value="AT1G22690"/>
</dbReference>
<dbReference type="Gramene" id="AT1G22690.2">
    <property type="protein sequence ID" value="AT1G22690.2"/>
    <property type="gene ID" value="AT1G22690"/>
</dbReference>
<dbReference type="Gramene" id="AT1G22690.3">
    <property type="protein sequence ID" value="AT1G22690.3"/>
    <property type="gene ID" value="AT1G22690"/>
</dbReference>
<dbReference type="KEGG" id="ath:AT1G22690"/>
<dbReference type="Araport" id="AT1G22690"/>
<dbReference type="TAIR" id="AT1G22690"/>
<dbReference type="eggNOG" id="ENOG502S4JD">
    <property type="taxonomic scope" value="Eukaryota"/>
</dbReference>
<dbReference type="HOGENOM" id="CLU_142643_0_1_1"/>
<dbReference type="InParanoid" id="Q8GWK5"/>
<dbReference type="OMA" id="INCGHAC"/>
<dbReference type="PhylomeDB" id="Q8GWK5"/>
<dbReference type="PRO" id="PR:Q8GWK5"/>
<dbReference type="Proteomes" id="UP000006548">
    <property type="component" value="Chromosome 1"/>
</dbReference>
<dbReference type="ExpressionAtlas" id="Q8GWK5">
    <property type="expression patterns" value="baseline and differential"/>
</dbReference>
<dbReference type="GO" id="GO:0005576">
    <property type="term" value="C:extracellular region"/>
    <property type="evidence" value="ECO:0007669"/>
    <property type="project" value="UniProtKB-SubCell"/>
</dbReference>
<dbReference type="GO" id="GO:0009740">
    <property type="term" value="P:gibberellic acid mediated signaling pathway"/>
    <property type="evidence" value="ECO:0007669"/>
    <property type="project" value="UniProtKB-KW"/>
</dbReference>
<dbReference type="InterPro" id="IPR003854">
    <property type="entry name" value="GASA"/>
</dbReference>
<dbReference type="PANTHER" id="PTHR23201">
    <property type="entry name" value="EXTENSIN, PROLINE-RICH PROTEIN"/>
    <property type="match status" value="1"/>
</dbReference>
<dbReference type="PANTHER" id="PTHR23201:SF154">
    <property type="entry name" value="GIBBERELLIN-REGULATED PROTEIN 9"/>
    <property type="match status" value="1"/>
</dbReference>
<dbReference type="Pfam" id="PF02704">
    <property type="entry name" value="GASA"/>
    <property type="match status" value="1"/>
</dbReference>
<organism>
    <name type="scientific">Arabidopsis thaliana</name>
    <name type="common">Mouse-ear cress</name>
    <dbReference type="NCBI Taxonomy" id="3702"/>
    <lineage>
        <taxon>Eukaryota</taxon>
        <taxon>Viridiplantae</taxon>
        <taxon>Streptophyta</taxon>
        <taxon>Embryophyta</taxon>
        <taxon>Tracheophyta</taxon>
        <taxon>Spermatophyta</taxon>
        <taxon>Magnoliopsida</taxon>
        <taxon>eudicotyledons</taxon>
        <taxon>Gunneridae</taxon>
        <taxon>Pentapetalae</taxon>
        <taxon>rosids</taxon>
        <taxon>malvids</taxon>
        <taxon>Brassicales</taxon>
        <taxon>Brassicaceae</taxon>
        <taxon>Camelineae</taxon>
        <taxon>Arabidopsis</taxon>
    </lineage>
</organism>
<evidence type="ECO:0000250" key="1"/>
<evidence type="ECO:0000255" key="2"/>
<evidence type="ECO:0000305" key="3"/>
<reference key="1">
    <citation type="journal article" date="2000" name="Nature">
        <title>Sequence and analysis of chromosome 1 of the plant Arabidopsis thaliana.</title>
        <authorList>
            <person name="Theologis A."/>
            <person name="Ecker J.R."/>
            <person name="Palm C.J."/>
            <person name="Federspiel N.A."/>
            <person name="Kaul S."/>
            <person name="White O."/>
            <person name="Alonso J."/>
            <person name="Altafi H."/>
            <person name="Araujo R."/>
            <person name="Bowman C.L."/>
            <person name="Brooks S.Y."/>
            <person name="Buehler E."/>
            <person name="Chan A."/>
            <person name="Chao Q."/>
            <person name="Chen H."/>
            <person name="Cheuk R.F."/>
            <person name="Chin C.W."/>
            <person name="Chung M.K."/>
            <person name="Conn L."/>
            <person name="Conway A.B."/>
            <person name="Conway A.R."/>
            <person name="Creasy T.H."/>
            <person name="Dewar K."/>
            <person name="Dunn P."/>
            <person name="Etgu P."/>
            <person name="Feldblyum T.V."/>
            <person name="Feng J.-D."/>
            <person name="Fong B."/>
            <person name="Fujii C.Y."/>
            <person name="Gill J.E."/>
            <person name="Goldsmith A.D."/>
            <person name="Haas B."/>
            <person name="Hansen N.F."/>
            <person name="Hughes B."/>
            <person name="Huizar L."/>
            <person name="Hunter J.L."/>
            <person name="Jenkins J."/>
            <person name="Johnson-Hopson C."/>
            <person name="Khan S."/>
            <person name="Khaykin E."/>
            <person name="Kim C.J."/>
            <person name="Koo H.L."/>
            <person name="Kremenetskaia I."/>
            <person name="Kurtz D.B."/>
            <person name="Kwan A."/>
            <person name="Lam B."/>
            <person name="Langin-Hooper S."/>
            <person name="Lee A."/>
            <person name="Lee J.M."/>
            <person name="Lenz C.A."/>
            <person name="Li J.H."/>
            <person name="Li Y.-P."/>
            <person name="Lin X."/>
            <person name="Liu S.X."/>
            <person name="Liu Z.A."/>
            <person name="Luros J.S."/>
            <person name="Maiti R."/>
            <person name="Marziali A."/>
            <person name="Militscher J."/>
            <person name="Miranda M."/>
            <person name="Nguyen M."/>
            <person name="Nierman W.C."/>
            <person name="Osborne B.I."/>
            <person name="Pai G."/>
            <person name="Peterson J."/>
            <person name="Pham P.K."/>
            <person name="Rizzo M."/>
            <person name="Rooney T."/>
            <person name="Rowley D."/>
            <person name="Sakano H."/>
            <person name="Salzberg S.L."/>
            <person name="Schwartz J.R."/>
            <person name="Shinn P."/>
            <person name="Southwick A.M."/>
            <person name="Sun H."/>
            <person name="Tallon L.J."/>
            <person name="Tambunga G."/>
            <person name="Toriumi M.J."/>
            <person name="Town C.D."/>
            <person name="Utterback T."/>
            <person name="Van Aken S."/>
            <person name="Vaysberg M."/>
            <person name="Vysotskaia V.S."/>
            <person name="Walker M."/>
            <person name="Wu D."/>
            <person name="Yu G."/>
            <person name="Fraser C.M."/>
            <person name="Venter J.C."/>
            <person name="Davis R.W."/>
        </authorList>
    </citation>
    <scope>NUCLEOTIDE SEQUENCE [LARGE SCALE GENOMIC DNA]</scope>
    <source>
        <strain>cv. Columbia</strain>
    </source>
</reference>
<reference key="2">
    <citation type="journal article" date="2017" name="Plant J.">
        <title>Araport11: a complete reannotation of the Arabidopsis thaliana reference genome.</title>
        <authorList>
            <person name="Cheng C.Y."/>
            <person name="Krishnakumar V."/>
            <person name="Chan A.P."/>
            <person name="Thibaud-Nissen F."/>
            <person name="Schobel S."/>
            <person name="Town C.D."/>
        </authorList>
    </citation>
    <scope>GENOME REANNOTATION</scope>
    <source>
        <strain>cv. Columbia</strain>
    </source>
</reference>
<reference key="3">
    <citation type="journal article" date="2002" name="Science">
        <title>Functional annotation of a full-length Arabidopsis cDNA collection.</title>
        <authorList>
            <person name="Seki M."/>
            <person name="Narusaka M."/>
            <person name="Kamiya A."/>
            <person name="Ishida J."/>
            <person name="Satou M."/>
            <person name="Sakurai T."/>
            <person name="Nakajima M."/>
            <person name="Enju A."/>
            <person name="Akiyama K."/>
            <person name="Oono Y."/>
            <person name="Muramatsu M."/>
            <person name="Hayashizaki Y."/>
            <person name="Kawai J."/>
            <person name="Carninci P."/>
            <person name="Itoh M."/>
            <person name="Ishii Y."/>
            <person name="Arakawa T."/>
            <person name="Shibata K."/>
            <person name="Shinagawa A."/>
            <person name="Shinozaki K."/>
        </authorList>
    </citation>
    <scope>NUCLEOTIDE SEQUENCE [LARGE SCALE MRNA]</scope>
    <source>
        <strain>cv. Columbia</strain>
    </source>
</reference>
<sequence>MKKMNVVAFVTLIISFLLLSQVLAELSSSSNNETSSVSQTNDENQTAAFKRTYHHRPRINCGHACARRCSKTSRKKVCHRACGSCCAKCQCVPPGTSGNTASCPCYASIRTHGNKLKCP</sequence>
<protein>
    <recommendedName>
        <fullName>Gibberellin-regulated protein 9</fullName>
    </recommendedName>
    <alternativeName>
        <fullName>GAST1 protein homolog 9</fullName>
    </alternativeName>
</protein>
<gene>
    <name type="primary">GASA9</name>
    <name type="ordered locus">At1g22690</name>
    <name type="ORF">T22J18.14</name>
</gene>